<keyword id="KW-0456">Lyase</keyword>
<keyword id="KW-0663">Pyridoxal phosphate</keyword>
<keyword id="KW-0704">Schiff base</keyword>
<proteinExistence type="inferred from homology"/>
<protein>
    <recommendedName>
        <fullName evidence="1">Pyridoxal 5'-phosphate synthase subunit PdxS</fullName>
        <shortName evidence="1">PLP synthase subunit PdxS</shortName>
        <ecNumber evidence="1">4.3.3.6</ecNumber>
    </recommendedName>
    <alternativeName>
        <fullName evidence="1">Pdx1</fullName>
    </alternativeName>
</protein>
<gene>
    <name evidence="1" type="primary">pdxS</name>
    <name type="ordered locus">FTA_1631</name>
</gene>
<comment type="function">
    <text evidence="1">Catalyzes the formation of pyridoxal 5'-phosphate from ribose 5-phosphate (RBP), glyceraldehyde 3-phosphate (G3P) and ammonia. The ammonia is provided by the PdxT subunit. Can also use ribulose 5-phosphate and dihydroxyacetone phosphate as substrates, resulting from enzyme-catalyzed isomerization of RBP and G3P, respectively.</text>
</comment>
<comment type="catalytic activity">
    <reaction evidence="1">
        <text>aldehydo-D-ribose 5-phosphate + D-glyceraldehyde 3-phosphate + L-glutamine = pyridoxal 5'-phosphate + L-glutamate + phosphate + 3 H2O + H(+)</text>
        <dbReference type="Rhea" id="RHEA:31507"/>
        <dbReference type="ChEBI" id="CHEBI:15377"/>
        <dbReference type="ChEBI" id="CHEBI:15378"/>
        <dbReference type="ChEBI" id="CHEBI:29985"/>
        <dbReference type="ChEBI" id="CHEBI:43474"/>
        <dbReference type="ChEBI" id="CHEBI:58273"/>
        <dbReference type="ChEBI" id="CHEBI:58359"/>
        <dbReference type="ChEBI" id="CHEBI:59776"/>
        <dbReference type="ChEBI" id="CHEBI:597326"/>
        <dbReference type="EC" id="4.3.3.6"/>
    </reaction>
</comment>
<comment type="pathway">
    <text evidence="1">Cofactor biosynthesis; pyridoxal 5'-phosphate biosynthesis.</text>
</comment>
<comment type="subunit">
    <text evidence="1">In the presence of PdxT, forms a dodecamer of heterodimers.</text>
</comment>
<comment type="similarity">
    <text evidence="1">Belongs to the PdxS/SNZ family.</text>
</comment>
<feature type="chain" id="PRO_1000070371" description="Pyridoxal 5'-phosphate synthase subunit PdxS">
    <location>
        <begin position="1"/>
        <end position="287"/>
    </location>
</feature>
<feature type="active site" description="Schiff-base intermediate with D-ribose 5-phosphate" evidence="1">
    <location>
        <position position="78"/>
    </location>
</feature>
<feature type="binding site" evidence="1">
    <location>
        <position position="21"/>
    </location>
    <ligand>
        <name>D-ribose 5-phosphate</name>
        <dbReference type="ChEBI" id="CHEBI:78346"/>
    </ligand>
</feature>
<feature type="binding site" evidence="1">
    <location>
        <position position="150"/>
    </location>
    <ligand>
        <name>D-ribose 5-phosphate</name>
        <dbReference type="ChEBI" id="CHEBI:78346"/>
    </ligand>
</feature>
<feature type="binding site" evidence="1">
    <location>
        <position position="162"/>
    </location>
    <ligand>
        <name>D-glyceraldehyde 3-phosphate</name>
        <dbReference type="ChEBI" id="CHEBI:59776"/>
    </ligand>
</feature>
<feature type="binding site" evidence="1">
    <location>
        <position position="211"/>
    </location>
    <ligand>
        <name>D-ribose 5-phosphate</name>
        <dbReference type="ChEBI" id="CHEBI:78346"/>
    </ligand>
</feature>
<feature type="binding site" evidence="1">
    <location>
        <begin position="232"/>
        <end position="233"/>
    </location>
    <ligand>
        <name>D-ribose 5-phosphate</name>
        <dbReference type="ChEBI" id="CHEBI:78346"/>
    </ligand>
</feature>
<sequence length="287" mass="30819">MSDINIKIGLAEMLKGGVIMDVVNAEQAEIAQQAGAVAVMALERVPADIRKDGGIARMSDPKLIKEIMSVVSIPVMAKARIGHFVEAQILESLGVDFIDESEVLTPADELNHIDKDSFKVPFVCGCTNLGEALRRIGEGAALIRTKGEAGTGNIVEAVRQLRQVNKDINYIKNADKSELMAIAKNLQAPYDLVTYVHKNGKLPVPNFSAGGVATPADAALMMQLGAESVFVGSGIFKSADPLKRARAIVSAVTYYNDAKILAEVSEDLGEPMTGINCDFEKFSQRGW</sequence>
<evidence type="ECO:0000255" key="1">
    <source>
        <dbReference type="HAMAP-Rule" id="MF_01824"/>
    </source>
</evidence>
<dbReference type="EC" id="4.3.3.6" evidence="1"/>
<dbReference type="EMBL" id="CP000803">
    <property type="protein sequence ID" value="ABU62106.1"/>
    <property type="molecule type" value="Genomic_DNA"/>
</dbReference>
<dbReference type="RefSeq" id="WP_003016899.1">
    <property type="nucleotide sequence ID" value="NC_009749.1"/>
</dbReference>
<dbReference type="SMR" id="A7NDQ3"/>
<dbReference type="KEGG" id="fta:FTA_1631"/>
<dbReference type="HOGENOM" id="CLU_055352_1_0_6"/>
<dbReference type="UniPathway" id="UPA00245"/>
<dbReference type="GO" id="GO:0036381">
    <property type="term" value="F:pyridoxal 5'-phosphate synthase (glutamine hydrolysing) activity"/>
    <property type="evidence" value="ECO:0007669"/>
    <property type="project" value="UniProtKB-UniRule"/>
</dbReference>
<dbReference type="GO" id="GO:0006520">
    <property type="term" value="P:amino acid metabolic process"/>
    <property type="evidence" value="ECO:0007669"/>
    <property type="project" value="TreeGrafter"/>
</dbReference>
<dbReference type="GO" id="GO:0042823">
    <property type="term" value="P:pyridoxal phosphate biosynthetic process"/>
    <property type="evidence" value="ECO:0007669"/>
    <property type="project" value="UniProtKB-UniRule"/>
</dbReference>
<dbReference type="GO" id="GO:0008615">
    <property type="term" value="P:pyridoxine biosynthetic process"/>
    <property type="evidence" value="ECO:0007669"/>
    <property type="project" value="TreeGrafter"/>
</dbReference>
<dbReference type="CDD" id="cd04727">
    <property type="entry name" value="pdxS"/>
    <property type="match status" value="1"/>
</dbReference>
<dbReference type="FunFam" id="3.20.20.70:FF:000001">
    <property type="entry name" value="Pyridoxine biosynthesis protein PDX1"/>
    <property type="match status" value="1"/>
</dbReference>
<dbReference type="Gene3D" id="3.20.20.70">
    <property type="entry name" value="Aldolase class I"/>
    <property type="match status" value="1"/>
</dbReference>
<dbReference type="HAMAP" id="MF_01824">
    <property type="entry name" value="PdxS"/>
    <property type="match status" value="1"/>
</dbReference>
<dbReference type="InterPro" id="IPR013785">
    <property type="entry name" value="Aldolase_TIM"/>
</dbReference>
<dbReference type="InterPro" id="IPR001852">
    <property type="entry name" value="PdxS/SNZ"/>
</dbReference>
<dbReference type="InterPro" id="IPR033755">
    <property type="entry name" value="PdxS/SNZ_N"/>
</dbReference>
<dbReference type="InterPro" id="IPR011060">
    <property type="entry name" value="RibuloseP-bd_barrel"/>
</dbReference>
<dbReference type="NCBIfam" id="NF003215">
    <property type="entry name" value="PRK04180.1"/>
    <property type="match status" value="1"/>
</dbReference>
<dbReference type="NCBIfam" id="TIGR00343">
    <property type="entry name" value="pyridoxal 5'-phosphate synthase lyase subunit PdxS"/>
    <property type="match status" value="1"/>
</dbReference>
<dbReference type="PANTHER" id="PTHR31829">
    <property type="entry name" value="PYRIDOXAL 5'-PHOSPHATE SYNTHASE SUBUNIT SNZ1-RELATED"/>
    <property type="match status" value="1"/>
</dbReference>
<dbReference type="PANTHER" id="PTHR31829:SF0">
    <property type="entry name" value="PYRIDOXAL 5'-PHOSPHATE SYNTHASE SUBUNIT SNZ1-RELATED"/>
    <property type="match status" value="1"/>
</dbReference>
<dbReference type="Pfam" id="PF01680">
    <property type="entry name" value="SOR_SNZ"/>
    <property type="match status" value="1"/>
</dbReference>
<dbReference type="PIRSF" id="PIRSF029271">
    <property type="entry name" value="Pdx1"/>
    <property type="match status" value="1"/>
</dbReference>
<dbReference type="SUPFAM" id="SSF51366">
    <property type="entry name" value="Ribulose-phoshate binding barrel"/>
    <property type="match status" value="1"/>
</dbReference>
<dbReference type="PROSITE" id="PS01235">
    <property type="entry name" value="PDXS_SNZ_1"/>
    <property type="match status" value="1"/>
</dbReference>
<dbReference type="PROSITE" id="PS51129">
    <property type="entry name" value="PDXS_SNZ_2"/>
    <property type="match status" value="1"/>
</dbReference>
<organism>
    <name type="scientific">Francisella tularensis subsp. holarctica (strain FTNF002-00 / FTA)</name>
    <dbReference type="NCBI Taxonomy" id="458234"/>
    <lineage>
        <taxon>Bacteria</taxon>
        <taxon>Pseudomonadati</taxon>
        <taxon>Pseudomonadota</taxon>
        <taxon>Gammaproteobacteria</taxon>
        <taxon>Thiotrichales</taxon>
        <taxon>Francisellaceae</taxon>
        <taxon>Francisella</taxon>
    </lineage>
</organism>
<accession>A7NDQ3</accession>
<name>PDXS_FRATF</name>
<reference key="1">
    <citation type="journal article" date="2009" name="PLoS ONE">
        <title>Complete genome sequence of Francisella tularensis subspecies holarctica FTNF002-00.</title>
        <authorList>
            <person name="Barabote R.D."/>
            <person name="Xie G."/>
            <person name="Brettin T.S."/>
            <person name="Hinrichs S.H."/>
            <person name="Fey P.D."/>
            <person name="Jay J.J."/>
            <person name="Engle J.L."/>
            <person name="Godbole S.D."/>
            <person name="Noronha J.M."/>
            <person name="Scheuermann R.H."/>
            <person name="Zhou L.W."/>
            <person name="Lion C."/>
            <person name="Dempsey M.P."/>
        </authorList>
    </citation>
    <scope>NUCLEOTIDE SEQUENCE [LARGE SCALE GENOMIC DNA]</scope>
    <source>
        <strain>FTNF002-00 / FTA</strain>
    </source>
</reference>